<accession>Q5PIV6</accession>
<gene>
    <name evidence="1" type="primary">rpsS</name>
    <name type="ordered locus">SPA3302</name>
</gene>
<dbReference type="EMBL" id="CP000026">
    <property type="protein sequence ID" value="AAV79118.1"/>
    <property type="molecule type" value="Genomic_DNA"/>
</dbReference>
<dbReference type="RefSeq" id="WP_001138115.1">
    <property type="nucleotide sequence ID" value="NC_006511.1"/>
</dbReference>
<dbReference type="SMR" id="Q5PIV6"/>
<dbReference type="GeneID" id="97603665"/>
<dbReference type="KEGG" id="spt:SPA3302"/>
<dbReference type="HOGENOM" id="CLU_144911_0_1_6"/>
<dbReference type="Proteomes" id="UP000008185">
    <property type="component" value="Chromosome"/>
</dbReference>
<dbReference type="GO" id="GO:0005737">
    <property type="term" value="C:cytoplasm"/>
    <property type="evidence" value="ECO:0007669"/>
    <property type="project" value="UniProtKB-ARBA"/>
</dbReference>
<dbReference type="GO" id="GO:0015935">
    <property type="term" value="C:small ribosomal subunit"/>
    <property type="evidence" value="ECO:0007669"/>
    <property type="project" value="InterPro"/>
</dbReference>
<dbReference type="GO" id="GO:0019843">
    <property type="term" value="F:rRNA binding"/>
    <property type="evidence" value="ECO:0007669"/>
    <property type="project" value="UniProtKB-UniRule"/>
</dbReference>
<dbReference type="GO" id="GO:0003735">
    <property type="term" value="F:structural constituent of ribosome"/>
    <property type="evidence" value="ECO:0007669"/>
    <property type="project" value="InterPro"/>
</dbReference>
<dbReference type="GO" id="GO:0000028">
    <property type="term" value="P:ribosomal small subunit assembly"/>
    <property type="evidence" value="ECO:0007669"/>
    <property type="project" value="TreeGrafter"/>
</dbReference>
<dbReference type="GO" id="GO:0006412">
    <property type="term" value="P:translation"/>
    <property type="evidence" value="ECO:0007669"/>
    <property type="project" value="UniProtKB-UniRule"/>
</dbReference>
<dbReference type="FunFam" id="3.30.860.10:FF:000001">
    <property type="entry name" value="30S ribosomal protein S19"/>
    <property type="match status" value="1"/>
</dbReference>
<dbReference type="Gene3D" id="3.30.860.10">
    <property type="entry name" value="30s Ribosomal Protein S19, Chain A"/>
    <property type="match status" value="1"/>
</dbReference>
<dbReference type="HAMAP" id="MF_00531">
    <property type="entry name" value="Ribosomal_uS19"/>
    <property type="match status" value="1"/>
</dbReference>
<dbReference type="InterPro" id="IPR002222">
    <property type="entry name" value="Ribosomal_uS19"/>
</dbReference>
<dbReference type="InterPro" id="IPR005732">
    <property type="entry name" value="Ribosomal_uS19_bac-type"/>
</dbReference>
<dbReference type="InterPro" id="IPR020934">
    <property type="entry name" value="Ribosomal_uS19_CS"/>
</dbReference>
<dbReference type="InterPro" id="IPR023575">
    <property type="entry name" value="Ribosomal_uS19_SF"/>
</dbReference>
<dbReference type="NCBIfam" id="TIGR01050">
    <property type="entry name" value="rpsS_bact"/>
    <property type="match status" value="1"/>
</dbReference>
<dbReference type="PANTHER" id="PTHR11880">
    <property type="entry name" value="RIBOSOMAL PROTEIN S19P FAMILY MEMBER"/>
    <property type="match status" value="1"/>
</dbReference>
<dbReference type="PANTHER" id="PTHR11880:SF8">
    <property type="entry name" value="SMALL RIBOSOMAL SUBUNIT PROTEIN US19M"/>
    <property type="match status" value="1"/>
</dbReference>
<dbReference type="Pfam" id="PF00203">
    <property type="entry name" value="Ribosomal_S19"/>
    <property type="match status" value="1"/>
</dbReference>
<dbReference type="PIRSF" id="PIRSF002144">
    <property type="entry name" value="Ribosomal_S19"/>
    <property type="match status" value="1"/>
</dbReference>
<dbReference type="PRINTS" id="PR00975">
    <property type="entry name" value="RIBOSOMALS19"/>
</dbReference>
<dbReference type="SUPFAM" id="SSF54570">
    <property type="entry name" value="Ribosomal protein S19"/>
    <property type="match status" value="1"/>
</dbReference>
<dbReference type="PROSITE" id="PS00323">
    <property type="entry name" value="RIBOSOMAL_S19"/>
    <property type="match status" value="1"/>
</dbReference>
<sequence length="92" mass="10416">MPRSLKKGPFIDLHLLKKVEKAVESGDKKPLRTWSRRSTIFPNMIGLTIAVHNGRQHVPVFVSDEMVGHKLGEFAPTRTYRGHAADKKAKKK</sequence>
<keyword id="KW-0687">Ribonucleoprotein</keyword>
<keyword id="KW-0689">Ribosomal protein</keyword>
<keyword id="KW-0694">RNA-binding</keyword>
<keyword id="KW-0699">rRNA-binding</keyword>
<feature type="chain" id="PRO_0000265426" description="Small ribosomal subunit protein uS19">
    <location>
        <begin position="1"/>
        <end position="92"/>
    </location>
</feature>
<proteinExistence type="inferred from homology"/>
<protein>
    <recommendedName>
        <fullName evidence="1">Small ribosomal subunit protein uS19</fullName>
    </recommendedName>
    <alternativeName>
        <fullName evidence="2">30S ribosomal protein S19</fullName>
    </alternativeName>
</protein>
<evidence type="ECO:0000255" key="1">
    <source>
        <dbReference type="HAMAP-Rule" id="MF_00531"/>
    </source>
</evidence>
<evidence type="ECO:0000305" key="2"/>
<name>RS19_SALPA</name>
<organism>
    <name type="scientific">Salmonella paratyphi A (strain ATCC 9150 / SARB42)</name>
    <dbReference type="NCBI Taxonomy" id="295319"/>
    <lineage>
        <taxon>Bacteria</taxon>
        <taxon>Pseudomonadati</taxon>
        <taxon>Pseudomonadota</taxon>
        <taxon>Gammaproteobacteria</taxon>
        <taxon>Enterobacterales</taxon>
        <taxon>Enterobacteriaceae</taxon>
        <taxon>Salmonella</taxon>
    </lineage>
</organism>
<comment type="function">
    <text evidence="1">Protein S19 forms a complex with S13 that binds strongly to the 16S ribosomal RNA.</text>
</comment>
<comment type="similarity">
    <text evidence="1">Belongs to the universal ribosomal protein uS19 family.</text>
</comment>
<reference key="1">
    <citation type="journal article" date="2004" name="Nat. Genet.">
        <title>Comparison of genome degradation in Paratyphi A and Typhi, human-restricted serovars of Salmonella enterica that cause typhoid.</title>
        <authorList>
            <person name="McClelland M."/>
            <person name="Sanderson K.E."/>
            <person name="Clifton S.W."/>
            <person name="Latreille P."/>
            <person name="Porwollik S."/>
            <person name="Sabo A."/>
            <person name="Meyer R."/>
            <person name="Bieri T."/>
            <person name="Ozersky P."/>
            <person name="McLellan M."/>
            <person name="Harkins C.R."/>
            <person name="Wang C."/>
            <person name="Nguyen C."/>
            <person name="Berghoff A."/>
            <person name="Elliott G."/>
            <person name="Kohlberg S."/>
            <person name="Strong C."/>
            <person name="Du F."/>
            <person name="Carter J."/>
            <person name="Kremizki C."/>
            <person name="Layman D."/>
            <person name="Leonard S."/>
            <person name="Sun H."/>
            <person name="Fulton L."/>
            <person name="Nash W."/>
            <person name="Miner T."/>
            <person name="Minx P."/>
            <person name="Delehaunty K."/>
            <person name="Fronick C."/>
            <person name="Magrini V."/>
            <person name="Nhan M."/>
            <person name="Warren W."/>
            <person name="Florea L."/>
            <person name="Spieth J."/>
            <person name="Wilson R.K."/>
        </authorList>
    </citation>
    <scope>NUCLEOTIDE SEQUENCE [LARGE SCALE GENOMIC DNA]</scope>
    <source>
        <strain>ATCC 9150 / SARB42</strain>
    </source>
</reference>